<protein>
    <recommendedName>
        <fullName evidence="1">Ribosome maturation factor RimM</fullName>
    </recommendedName>
</protein>
<reference key="1">
    <citation type="submission" date="2007-10" db="EMBL/GenBank/DDBJ databases">
        <title>Complete sequence of chromosome 1 of Burkholderia multivorans ATCC 17616.</title>
        <authorList>
            <person name="Copeland A."/>
            <person name="Lucas S."/>
            <person name="Lapidus A."/>
            <person name="Barry K."/>
            <person name="Glavina del Rio T."/>
            <person name="Dalin E."/>
            <person name="Tice H."/>
            <person name="Pitluck S."/>
            <person name="Chain P."/>
            <person name="Malfatti S."/>
            <person name="Shin M."/>
            <person name="Vergez L."/>
            <person name="Schmutz J."/>
            <person name="Larimer F."/>
            <person name="Land M."/>
            <person name="Hauser L."/>
            <person name="Kyrpides N."/>
            <person name="Kim E."/>
            <person name="Tiedje J."/>
            <person name="Richardson P."/>
        </authorList>
    </citation>
    <scope>NUCLEOTIDE SEQUENCE [LARGE SCALE GENOMIC DNA]</scope>
    <source>
        <strain>ATCC 17616 / 249</strain>
    </source>
</reference>
<reference key="2">
    <citation type="submission" date="2007-04" db="EMBL/GenBank/DDBJ databases">
        <title>Complete genome sequence of Burkholderia multivorans ATCC 17616.</title>
        <authorList>
            <person name="Ohtsubo Y."/>
            <person name="Yamashita A."/>
            <person name="Kurokawa K."/>
            <person name="Takami H."/>
            <person name="Yuhara S."/>
            <person name="Nishiyama E."/>
            <person name="Endo R."/>
            <person name="Miyazaki R."/>
            <person name="Ono A."/>
            <person name="Yano K."/>
            <person name="Ito M."/>
            <person name="Sota M."/>
            <person name="Yuji N."/>
            <person name="Hattori M."/>
            <person name="Tsuda M."/>
        </authorList>
    </citation>
    <scope>NUCLEOTIDE SEQUENCE [LARGE SCALE GENOMIC DNA]</scope>
    <source>
        <strain>ATCC 17616 / 249</strain>
    </source>
</reference>
<name>RIMM_BURM1</name>
<sequence>MSDHDSGNARRGRASFGAFVRKPVERGAPAGAAAEQGGLDAVQALPDDAVEVGAVVDAYGLKGWVKVATHADAGRGGDALLSARRWWLEKGTQRFSARIVQSKTHGDTVVAQPAGVGDRDAALALRGFRVFVRREDFPALAADEFYWVDLIGLDVVNEQSATLGKVVGMIDNGAHSIMRVEYPSVGKDGRPAAAERLIPFVGVYVKTVDQAARRIVVDWEADY</sequence>
<organism>
    <name type="scientific">Burkholderia multivorans (strain ATCC 17616 / 249)</name>
    <dbReference type="NCBI Taxonomy" id="395019"/>
    <lineage>
        <taxon>Bacteria</taxon>
        <taxon>Pseudomonadati</taxon>
        <taxon>Pseudomonadota</taxon>
        <taxon>Betaproteobacteria</taxon>
        <taxon>Burkholderiales</taxon>
        <taxon>Burkholderiaceae</taxon>
        <taxon>Burkholderia</taxon>
        <taxon>Burkholderia cepacia complex</taxon>
    </lineage>
</organism>
<accession>A9ADT0</accession>
<keyword id="KW-0143">Chaperone</keyword>
<keyword id="KW-0963">Cytoplasm</keyword>
<keyword id="KW-1185">Reference proteome</keyword>
<keyword id="KW-0690">Ribosome biogenesis</keyword>
<keyword id="KW-0698">rRNA processing</keyword>
<evidence type="ECO:0000255" key="1">
    <source>
        <dbReference type="HAMAP-Rule" id="MF_00014"/>
    </source>
</evidence>
<comment type="function">
    <text evidence="1">An accessory protein needed during the final step in the assembly of 30S ribosomal subunit, possibly for assembly of the head region. Essential for efficient processing of 16S rRNA. May be needed both before and after RbfA during the maturation of 16S rRNA. It has affinity for free ribosomal 30S subunits but not for 70S ribosomes.</text>
</comment>
<comment type="subunit">
    <text evidence="1">Binds ribosomal protein uS19.</text>
</comment>
<comment type="subcellular location">
    <subcellularLocation>
        <location evidence="1">Cytoplasm</location>
    </subcellularLocation>
</comment>
<comment type="domain">
    <text evidence="1">The PRC barrel domain binds ribosomal protein uS19.</text>
</comment>
<comment type="similarity">
    <text evidence="1">Belongs to the RimM family.</text>
</comment>
<dbReference type="EMBL" id="CP000868">
    <property type="protein sequence ID" value="ABX15918.1"/>
    <property type="molecule type" value="Genomic_DNA"/>
</dbReference>
<dbReference type="EMBL" id="AP009385">
    <property type="protein sequence ID" value="BAG42952.1"/>
    <property type="molecule type" value="Genomic_DNA"/>
</dbReference>
<dbReference type="RefSeq" id="WP_006406230.1">
    <property type="nucleotide sequence ID" value="NC_010804.1"/>
</dbReference>
<dbReference type="SMR" id="A9ADT0"/>
<dbReference type="STRING" id="395019.BMULJ_01006"/>
<dbReference type="GeneID" id="89569366"/>
<dbReference type="KEGG" id="bmj:BMULJ_01006"/>
<dbReference type="KEGG" id="bmu:Bmul_2233"/>
<dbReference type="eggNOG" id="COG0806">
    <property type="taxonomic scope" value="Bacteria"/>
</dbReference>
<dbReference type="HOGENOM" id="CLU_077636_1_0_4"/>
<dbReference type="Proteomes" id="UP000008815">
    <property type="component" value="Chromosome 1"/>
</dbReference>
<dbReference type="GO" id="GO:0005737">
    <property type="term" value="C:cytoplasm"/>
    <property type="evidence" value="ECO:0007669"/>
    <property type="project" value="UniProtKB-SubCell"/>
</dbReference>
<dbReference type="GO" id="GO:0005840">
    <property type="term" value="C:ribosome"/>
    <property type="evidence" value="ECO:0007669"/>
    <property type="project" value="InterPro"/>
</dbReference>
<dbReference type="GO" id="GO:0043022">
    <property type="term" value="F:ribosome binding"/>
    <property type="evidence" value="ECO:0007669"/>
    <property type="project" value="InterPro"/>
</dbReference>
<dbReference type="GO" id="GO:0042274">
    <property type="term" value="P:ribosomal small subunit biogenesis"/>
    <property type="evidence" value="ECO:0007669"/>
    <property type="project" value="UniProtKB-UniRule"/>
</dbReference>
<dbReference type="GO" id="GO:0006364">
    <property type="term" value="P:rRNA processing"/>
    <property type="evidence" value="ECO:0007669"/>
    <property type="project" value="UniProtKB-UniRule"/>
</dbReference>
<dbReference type="Gene3D" id="2.30.30.240">
    <property type="entry name" value="PRC-barrel domain"/>
    <property type="match status" value="1"/>
</dbReference>
<dbReference type="Gene3D" id="2.40.30.60">
    <property type="entry name" value="RimM"/>
    <property type="match status" value="1"/>
</dbReference>
<dbReference type="HAMAP" id="MF_00014">
    <property type="entry name" value="Ribosome_mat_RimM"/>
    <property type="match status" value="1"/>
</dbReference>
<dbReference type="InterPro" id="IPR011033">
    <property type="entry name" value="PRC_barrel-like_sf"/>
</dbReference>
<dbReference type="InterPro" id="IPR056792">
    <property type="entry name" value="PRC_RimM"/>
</dbReference>
<dbReference type="InterPro" id="IPR011961">
    <property type="entry name" value="RimM"/>
</dbReference>
<dbReference type="InterPro" id="IPR002676">
    <property type="entry name" value="RimM_N"/>
</dbReference>
<dbReference type="InterPro" id="IPR036976">
    <property type="entry name" value="RimM_N_sf"/>
</dbReference>
<dbReference type="InterPro" id="IPR009000">
    <property type="entry name" value="Transl_B-barrel_sf"/>
</dbReference>
<dbReference type="NCBIfam" id="TIGR02273">
    <property type="entry name" value="16S_RimM"/>
    <property type="match status" value="1"/>
</dbReference>
<dbReference type="PANTHER" id="PTHR33692">
    <property type="entry name" value="RIBOSOME MATURATION FACTOR RIMM"/>
    <property type="match status" value="1"/>
</dbReference>
<dbReference type="PANTHER" id="PTHR33692:SF1">
    <property type="entry name" value="RIBOSOME MATURATION FACTOR RIMM"/>
    <property type="match status" value="1"/>
</dbReference>
<dbReference type="Pfam" id="PF24986">
    <property type="entry name" value="PRC_RimM"/>
    <property type="match status" value="1"/>
</dbReference>
<dbReference type="Pfam" id="PF01782">
    <property type="entry name" value="RimM"/>
    <property type="match status" value="1"/>
</dbReference>
<dbReference type="SUPFAM" id="SSF50346">
    <property type="entry name" value="PRC-barrel domain"/>
    <property type="match status" value="1"/>
</dbReference>
<dbReference type="SUPFAM" id="SSF50447">
    <property type="entry name" value="Translation proteins"/>
    <property type="match status" value="1"/>
</dbReference>
<proteinExistence type="inferred from homology"/>
<feature type="chain" id="PRO_0000351735" description="Ribosome maturation factor RimM">
    <location>
        <begin position="1"/>
        <end position="223"/>
    </location>
</feature>
<feature type="domain" description="PRC barrel" evidence="1">
    <location>
        <begin position="142"/>
        <end position="223"/>
    </location>
</feature>
<gene>
    <name evidence="1" type="primary">rimM</name>
    <name type="ordered locus">Bmul_2233</name>
    <name type="ordered locus">BMULJ_01006</name>
</gene>